<protein>
    <recommendedName>
        <fullName evidence="4">N-acetyltaurine hydrolase</fullName>
        <ecNumber evidence="2">3.1.-.-</ecNumber>
    </recommendedName>
    <alternativeName>
        <fullName evidence="2">Phosphotriesterase-related protein</fullName>
    </alternativeName>
</protein>
<accession>Q54BV6</accession>
<dbReference type="EC" id="3.1.-.-" evidence="2"/>
<dbReference type="EMBL" id="AAFI02000205">
    <property type="protein sequence ID" value="EAL60746.1"/>
    <property type="molecule type" value="Genomic_DNA"/>
</dbReference>
<dbReference type="RefSeq" id="XP_629160.1">
    <property type="nucleotide sequence ID" value="XM_629158.1"/>
</dbReference>
<dbReference type="SMR" id="Q54BV6"/>
<dbReference type="STRING" id="44689.Q54BV6"/>
<dbReference type="PaxDb" id="44689-DDB0266377"/>
<dbReference type="EnsemblProtists" id="EAL60746">
    <property type="protein sequence ID" value="EAL60746"/>
    <property type="gene ID" value="DDB_G0293394"/>
</dbReference>
<dbReference type="GeneID" id="8629199"/>
<dbReference type="KEGG" id="ddi:DDB_G0293394"/>
<dbReference type="dictyBase" id="DDB_G0293394">
    <property type="gene designation" value="pter"/>
</dbReference>
<dbReference type="VEuPathDB" id="AmoebaDB:DDB_G0293394"/>
<dbReference type="eggNOG" id="ENOG502QQQR">
    <property type="taxonomic scope" value="Eukaryota"/>
</dbReference>
<dbReference type="HOGENOM" id="CLU_054760_0_0_1"/>
<dbReference type="InParanoid" id="Q54BV6"/>
<dbReference type="OMA" id="MVKCGFI"/>
<dbReference type="PhylomeDB" id="Q54BV6"/>
<dbReference type="PRO" id="PR:Q54BV6"/>
<dbReference type="Proteomes" id="UP000002195">
    <property type="component" value="Chromosome 6"/>
</dbReference>
<dbReference type="GO" id="GO:0005829">
    <property type="term" value="C:cytosol"/>
    <property type="evidence" value="ECO:0007669"/>
    <property type="project" value="UniProtKB-SubCell"/>
</dbReference>
<dbReference type="GO" id="GO:0141215">
    <property type="term" value="F:N-acetyltaurine hydrolase activity"/>
    <property type="evidence" value="ECO:0007669"/>
    <property type="project" value="RHEA"/>
</dbReference>
<dbReference type="GO" id="GO:0008270">
    <property type="term" value="F:zinc ion binding"/>
    <property type="evidence" value="ECO:0007669"/>
    <property type="project" value="InterPro"/>
</dbReference>
<dbReference type="GO" id="GO:0009056">
    <property type="term" value="P:catabolic process"/>
    <property type="evidence" value="ECO:0007669"/>
    <property type="project" value="InterPro"/>
</dbReference>
<dbReference type="Gene3D" id="3.20.20.140">
    <property type="entry name" value="Metal-dependent hydrolases"/>
    <property type="match status" value="1"/>
</dbReference>
<dbReference type="InterPro" id="IPR032466">
    <property type="entry name" value="Metal_Hydrolase"/>
</dbReference>
<dbReference type="InterPro" id="IPR001559">
    <property type="entry name" value="Phosphotriesterase"/>
</dbReference>
<dbReference type="PANTHER" id="PTHR10819">
    <property type="entry name" value="PHOSPHOTRIESTERASE-RELATED"/>
    <property type="match status" value="1"/>
</dbReference>
<dbReference type="PANTHER" id="PTHR10819:SF3">
    <property type="entry name" value="PHOSPHOTRIESTERASE-RELATED PROTEIN"/>
    <property type="match status" value="1"/>
</dbReference>
<dbReference type="Pfam" id="PF02126">
    <property type="entry name" value="PTE"/>
    <property type="match status" value="1"/>
</dbReference>
<dbReference type="PIRSF" id="PIRSF016839">
    <property type="entry name" value="PhP"/>
    <property type="match status" value="1"/>
</dbReference>
<dbReference type="SUPFAM" id="SSF51556">
    <property type="entry name" value="Metallo-dependent hydrolases"/>
    <property type="match status" value="1"/>
</dbReference>
<dbReference type="PROSITE" id="PS51347">
    <property type="entry name" value="PHOSPHOTRIESTERASE_2"/>
    <property type="match status" value="1"/>
</dbReference>
<feature type="chain" id="PRO_0000327483" description="N-acetyltaurine hydrolase">
    <location>
        <begin position="1"/>
        <end position="370"/>
    </location>
</feature>
<feature type="binding site" evidence="1">
    <location>
        <position position="26"/>
    </location>
    <ligand>
        <name>a divalent metal cation</name>
        <dbReference type="ChEBI" id="CHEBI:60240"/>
        <label>1</label>
    </ligand>
</feature>
<feature type="binding site" evidence="1">
    <location>
        <position position="28"/>
    </location>
    <ligand>
        <name>a divalent metal cation</name>
        <dbReference type="ChEBI" id="CHEBI:60240"/>
        <label>1</label>
    </ligand>
</feature>
<feature type="binding site" evidence="1">
    <location>
        <position position="189"/>
    </location>
    <ligand>
        <name>a divalent metal cation</name>
        <dbReference type="ChEBI" id="CHEBI:60240"/>
        <label>1</label>
    </ligand>
</feature>
<feature type="binding site" evidence="1">
    <location>
        <position position="189"/>
    </location>
    <ligand>
        <name>a divalent metal cation</name>
        <dbReference type="ChEBI" id="CHEBI:60240"/>
        <label>2</label>
    </ligand>
</feature>
<feature type="binding site" evidence="1">
    <location>
        <position position="221"/>
    </location>
    <ligand>
        <name>a divalent metal cation</name>
        <dbReference type="ChEBI" id="CHEBI:60240"/>
        <label>2</label>
    </ligand>
</feature>
<feature type="binding site" evidence="1">
    <location>
        <position position="250"/>
    </location>
    <ligand>
        <name>a divalent metal cation</name>
        <dbReference type="ChEBI" id="CHEBI:60240"/>
        <label>2</label>
    </ligand>
</feature>
<feature type="binding site" evidence="1">
    <location>
        <position position="318"/>
    </location>
    <ligand>
        <name>a divalent metal cation</name>
        <dbReference type="ChEBI" id="CHEBI:60240"/>
        <label>1</label>
    </ligand>
</feature>
<keyword id="KW-0963">Cytoplasm</keyword>
<keyword id="KW-0378">Hydrolase</keyword>
<keyword id="KW-0479">Metal-binding</keyword>
<keyword id="KW-1185">Reference proteome</keyword>
<organism>
    <name type="scientific">Dictyostelium discoideum</name>
    <name type="common">Social amoeba</name>
    <dbReference type="NCBI Taxonomy" id="44689"/>
    <lineage>
        <taxon>Eukaryota</taxon>
        <taxon>Amoebozoa</taxon>
        <taxon>Evosea</taxon>
        <taxon>Eumycetozoa</taxon>
        <taxon>Dictyostelia</taxon>
        <taxon>Dictyosteliales</taxon>
        <taxon>Dictyosteliaceae</taxon>
        <taxon>Dictyostelium</taxon>
    </lineage>
</organism>
<name>PTER_DICDI</name>
<comment type="function">
    <text evidence="2">N-acetyltaurine hydrolase catalyzes the hydrolysis of N-acetyltaurine into taurine and acetate.</text>
</comment>
<comment type="catalytic activity">
    <reaction evidence="2">
        <text>N-acetyltaurine + H2O = taurine + acetate</text>
        <dbReference type="Rhea" id="RHEA:81107"/>
        <dbReference type="ChEBI" id="CHEBI:15377"/>
        <dbReference type="ChEBI" id="CHEBI:30089"/>
        <dbReference type="ChEBI" id="CHEBI:133737"/>
        <dbReference type="ChEBI" id="CHEBI:507393"/>
    </reaction>
    <physiologicalReaction direction="left-to-right" evidence="2">
        <dbReference type="Rhea" id="RHEA:81108"/>
    </physiologicalReaction>
</comment>
<comment type="cofactor">
    <cofactor evidence="1">
        <name>a divalent metal cation</name>
        <dbReference type="ChEBI" id="CHEBI:60240"/>
    </cofactor>
    <text evidence="1">Binds 2 divalent metal cations per subunit.</text>
</comment>
<comment type="subcellular location">
    <subcellularLocation>
        <location evidence="2">Cytoplasm</location>
        <location evidence="2">Cytosol</location>
    </subcellularLocation>
</comment>
<comment type="similarity">
    <text evidence="3">Belongs to the metallo-dependent hydrolases superfamily. Phosphotriesterase family.</text>
</comment>
<reference key="1">
    <citation type="journal article" date="2005" name="Nature">
        <title>The genome of the social amoeba Dictyostelium discoideum.</title>
        <authorList>
            <person name="Eichinger L."/>
            <person name="Pachebat J.A."/>
            <person name="Gloeckner G."/>
            <person name="Rajandream M.A."/>
            <person name="Sucgang R."/>
            <person name="Berriman M."/>
            <person name="Song J."/>
            <person name="Olsen R."/>
            <person name="Szafranski K."/>
            <person name="Xu Q."/>
            <person name="Tunggal B."/>
            <person name="Kummerfeld S."/>
            <person name="Madera M."/>
            <person name="Konfortov B.A."/>
            <person name="Rivero F."/>
            <person name="Bankier A.T."/>
            <person name="Lehmann R."/>
            <person name="Hamlin N."/>
            <person name="Davies R."/>
            <person name="Gaudet P."/>
            <person name="Fey P."/>
            <person name="Pilcher K."/>
            <person name="Chen G."/>
            <person name="Saunders D."/>
            <person name="Sodergren E.J."/>
            <person name="Davis P."/>
            <person name="Kerhornou A."/>
            <person name="Nie X."/>
            <person name="Hall N."/>
            <person name="Anjard C."/>
            <person name="Hemphill L."/>
            <person name="Bason N."/>
            <person name="Farbrother P."/>
            <person name="Desany B."/>
            <person name="Just E."/>
            <person name="Morio T."/>
            <person name="Rost R."/>
            <person name="Churcher C.M."/>
            <person name="Cooper J."/>
            <person name="Haydock S."/>
            <person name="van Driessche N."/>
            <person name="Cronin A."/>
            <person name="Goodhead I."/>
            <person name="Muzny D.M."/>
            <person name="Mourier T."/>
            <person name="Pain A."/>
            <person name="Lu M."/>
            <person name="Harper D."/>
            <person name="Lindsay R."/>
            <person name="Hauser H."/>
            <person name="James K.D."/>
            <person name="Quiles M."/>
            <person name="Madan Babu M."/>
            <person name="Saito T."/>
            <person name="Buchrieser C."/>
            <person name="Wardroper A."/>
            <person name="Felder M."/>
            <person name="Thangavelu M."/>
            <person name="Johnson D."/>
            <person name="Knights A."/>
            <person name="Loulseged H."/>
            <person name="Mungall K.L."/>
            <person name="Oliver K."/>
            <person name="Price C."/>
            <person name="Quail M.A."/>
            <person name="Urushihara H."/>
            <person name="Hernandez J."/>
            <person name="Rabbinowitsch E."/>
            <person name="Steffen D."/>
            <person name="Sanders M."/>
            <person name="Ma J."/>
            <person name="Kohara Y."/>
            <person name="Sharp S."/>
            <person name="Simmonds M.N."/>
            <person name="Spiegler S."/>
            <person name="Tivey A."/>
            <person name="Sugano S."/>
            <person name="White B."/>
            <person name="Walker D."/>
            <person name="Woodward J.R."/>
            <person name="Winckler T."/>
            <person name="Tanaka Y."/>
            <person name="Shaulsky G."/>
            <person name="Schleicher M."/>
            <person name="Weinstock G.M."/>
            <person name="Rosenthal A."/>
            <person name="Cox E.C."/>
            <person name="Chisholm R.L."/>
            <person name="Gibbs R.A."/>
            <person name="Loomis W.F."/>
            <person name="Platzer M."/>
            <person name="Kay R.R."/>
            <person name="Williams J.G."/>
            <person name="Dear P.H."/>
            <person name="Noegel A.A."/>
            <person name="Barrell B.G."/>
            <person name="Kuspa A."/>
        </authorList>
    </citation>
    <scope>NUCLEOTIDE SEQUENCE [LARGE SCALE GENOMIC DNA]</scope>
    <source>
        <strain>AX4</strain>
    </source>
</reference>
<evidence type="ECO:0000250" key="1">
    <source>
        <dbReference type="UniProtKB" id="P45548"/>
    </source>
</evidence>
<evidence type="ECO:0000250" key="2">
    <source>
        <dbReference type="UniProtKB" id="Q60866"/>
    </source>
</evidence>
<evidence type="ECO:0000255" key="3">
    <source>
        <dbReference type="PROSITE-ProRule" id="PRU00679"/>
    </source>
</evidence>
<evidence type="ECO:0000305" key="4"/>
<sequence length="370" mass="41694">MTERIGKIQTIKGLIEKDELGITHMHEHIFINYLDYFEKPNEQELKMCCLGGGSGSGNSNSNKTIEDLSNEKISLINNHWVQYNYNKNLHNLQLNEMEIAIRELEMFKRNGGSTIVEVTTKGIGRDPLQCLKVSQELNINIVMGAGYYLDKSISQFVQSMTEKQMEDEIVKQCLIGIDDTSIKAGIIGEVGCSFPLTNNEKKSLIASAKAQQRTGLSISIHPGRSQTAPLEIIQILKDSGADLSRVIIGHIDRTIHDINILLETAKTGCILEFDLFGMEISHYPFGGEVGMPSDNQRIEWIYQLIKHGYGENIVISHDIYTKHRLVSYGGHGYSHILFNIIPRMKKFGYSDTDINNILINNPKRLLTIIK</sequence>
<proteinExistence type="inferred from homology"/>
<gene>
    <name type="primary">pter</name>
    <name type="ORF">DDB_G0293394</name>
</gene>